<accession>Q566D0</accession>
<evidence type="ECO:0000250" key="1"/>
<evidence type="ECO:0000255" key="2"/>
<evidence type="ECO:0000305" key="3"/>
<feature type="chain" id="PRO_0000219292" description="Uroplakin-1b">
    <location>
        <begin position="1"/>
        <end position="260"/>
    </location>
</feature>
<feature type="topological domain" description="Cytoplasmic" evidence="2">
    <location>
        <begin position="1"/>
        <end position="15"/>
    </location>
</feature>
<feature type="transmembrane region" description="Helical" evidence="2">
    <location>
        <begin position="16"/>
        <end position="36"/>
    </location>
</feature>
<feature type="topological domain" description="Extracellular" evidence="2">
    <location>
        <begin position="37"/>
        <end position="59"/>
    </location>
</feature>
<feature type="transmembrane region" description="Helical" evidence="2">
    <location>
        <begin position="60"/>
        <end position="80"/>
    </location>
</feature>
<feature type="topological domain" description="Cytoplasmic" evidence="2">
    <location>
        <begin position="81"/>
        <end position="86"/>
    </location>
</feature>
<feature type="transmembrane region" description="Helical" evidence="2">
    <location>
        <begin position="87"/>
        <end position="107"/>
    </location>
</feature>
<feature type="topological domain" description="Extracellular" evidence="2">
    <location>
        <begin position="108"/>
        <end position="229"/>
    </location>
</feature>
<feature type="transmembrane region" description="Helical" evidence="2">
    <location>
        <begin position="230"/>
        <end position="250"/>
    </location>
</feature>
<feature type="topological domain" description="Cytoplasmic" evidence="2">
    <location>
        <begin position="251"/>
        <end position="260"/>
    </location>
</feature>
<protein>
    <recommendedName>
        <fullName>Uroplakin-1b</fullName>
        <shortName>UP1b</shortName>
    </recommendedName>
    <alternativeName>
        <fullName>Uroplakin Ib</fullName>
        <shortName>UPIb</shortName>
    </alternativeName>
</protein>
<comment type="function">
    <text evidence="1">Component of the asymmetric unit membrane (AUM); a highly specialized biomembrane elaborated by terminally differentiated urothelial cells. May play an important role in normal bladder epithelial physiology, possibly in regulating membrane permeability of superficial umbrella cells or in stabilizing the apical membrane through AUM/cytoskeletal interactions (By similarity).</text>
</comment>
<comment type="subunit">
    <text evidence="1">Heterodimer with uroplakin-3A (UPK3A) or uroplakin-3B (UPK3B).</text>
</comment>
<comment type="subcellular location">
    <subcellularLocation>
        <location>Membrane</location>
        <topology>Multi-pass membrane protein</topology>
    </subcellularLocation>
</comment>
<comment type="PTM">
    <text evidence="1">N-glycosylated with high-mannose oligosaccharides.</text>
</comment>
<comment type="similarity">
    <text evidence="3">Belongs to the tetraspanin (TM4SF) family.</text>
</comment>
<dbReference type="EMBL" id="BC093613">
    <property type="protein sequence ID" value="AAH93613.1"/>
    <property type="molecule type" value="mRNA"/>
</dbReference>
<dbReference type="RefSeq" id="NP_001019424.1">
    <property type="nucleotide sequence ID" value="NM_001024253.2"/>
</dbReference>
<dbReference type="RefSeq" id="XP_006248430.1">
    <property type="nucleotide sequence ID" value="XM_006248368.5"/>
</dbReference>
<dbReference type="SMR" id="Q566D0"/>
<dbReference type="FunCoup" id="Q566D0">
    <property type="interactions" value="46"/>
</dbReference>
<dbReference type="STRING" id="10116.ENSRNOP00000004315"/>
<dbReference type="PhosphoSitePlus" id="Q566D0"/>
<dbReference type="PaxDb" id="10116-ENSRNOP00000004315"/>
<dbReference type="GeneID" id="303924"/>
<dbReference type="KEGG" id="rno:303924"/>
<dbReference type="AGR" id="RGD:1307806"/>
<dbReference type="CTD" id="7348"/>
<dbReference type="RGD" id="1307806">
    <property type="gene designation" value="Upk1b"/>
</dbReference>
<dbReference type="eggNOG" id="KOG3882">
    <property type="taxonomic scope" value="Eukaryota"/>
</dbReference>
<dbReference type="HOGENOM" id="CLU_088971_1_0_1"/>
<dbReference type="InParanoid" id="Q566D0"/>
<dbReference type="OrthoDB" id="592at9989"/>
<dbReference type="PhylomeDB" id="Q566D0"/>
<dbReference type="TreeFam" id="TF335659"/>
<dbReference type="PRO" id="PR:Q566D0"/>
<dbReference type="Proteomes" id="UP000002494">
    <property type="component" value="Unplaced"/>
</dbReference>
<dbReference type="GO" id="GO:0016324">
    <property type="term" value="C:apical plasma membrane"/>
    <property type="evidence" value="ECO:0000266"/>
    <property type="project" value="RGD"/>
</dbReference>
<dbReference type="GO" id="GO:0120001">
    <property type="term" value="C:apical plasma membrane urothelial plaque"/>
    <property type="evidence" value="ECO:0000266"/>
    <property type="project" value="RGD"/>
</dbReference>
<dbReference type="GO" id="GO:0030855">
    <property type="term" value="P:epithelial cell differentiation"/>
    <property type="evidence" value="ECO:0000266"/>
    <property type="project" value="RGD"/>
</dbReference>
<dbReference type="GO" id="GO:0009617">
    <property type="term" value="P:response to bacterium"/>
    <property type="evidence" value="ECO:0000266"/>
    <property type="project" value="RGD"/>
</dbReference>
<dbReference type="CDD" id="cd03156">
    <property type="entry name" value="uroplakin_I_like_LEL"/>
    <property type="match status" value="1"/>
</dbReference>
<dbReference type="FunFam" id="1.10.1450.10:FF:000014">
    <property type="entry name" value="Tetraspanin"/>
    <property type="match status" value="1"/>
</dbReference>
<dbReference type="Gene3D" id="1.10.1450.10">
    <property type="entry name" value="Tetraspanin"/>
    <property type="match status" value="1"/>
</dbReference>
<dbReference type="InterPro" id="IPR018499">
    <property type="entry name" value="Tetraspanin/Peripherin"/>
</dbReference>
<dbReference type="InterPro" id="IPR008952">
    <property type="entry name" value="Tetraspanin_EC2_sf"/>
</dbReference>
<dbReference type="PANTHER" id="PTHR47110">
    <property type="entry name" value="TESTIS-SPECIFIC EXPRESSED PROTEIN 55"/>
    <property type="match status" value="1"/>
</dbReference>
<dbReference type="PANTHER" id="PTHR47110:SF2">
    <property type="entry name" value="UROPLAKIN-1B"/>
    <property type="match status" value="1"/>
</dbReference>
<dbReference type="Pfam" id="PF00335">
    <property type="entry name" value="Tetraspanin"/>
    <property type="match status" value="1"/>
</dbReference>
<dbReference type="SUPFAM" id="SSF48652">
    <property type="entry name" value="Tetraspanin"/>
    <property type="match status" value="1"/>
</dbReference>
<name>UPK1B_RAT</name>
<organism>
    <name type="scientific">Rattus norvegicus</name>
    <name type="common">Rat</name>
    <dbReference type="NCBI Taxonomy" id="10116"/>
    <lineage>
        <taxon>Eukaryota</taxon>
        <taxon>Metazoa</taxon>
        <taxon>Chordata</taxon>
        <taxon>Craniata</taxon>
        <taxon>Vertebrata</taxon>
        <taxon>Euteleostomi</taxon>
        <taxon>Mammalia</taxon>
        <taxon>Eutheria</taxon>
        <taxon>Euarchontoglires</taxon>
        <taxon>Glires</taxon>
        <taxon>Rodentia</taxon>
        <taxon>Myomorpha</taxon>
        <taxon>Muroidea</taxon>
        <taxon>Muridae</taxon>
        <taxon>Murinae</taxon>
        <taxon>Rattus</taxon>
    </lineage>
</organism>
<proteinExistence type="evidence at transcript level"/>
<gene>
    <name type="primary">Upk1b</name>
</gene>
<sequence length="260" mass="29813">MAKDDSTVRCFQGLLIFGHVIVGMCGIALTAECIFFVSDQHSLYPLLEATNNDDIFGAAWIGMFVGICLFCLSVLAIVGIMKSNRKILLAYFIMMFIVYGFEVASCITAATQRDFFTTNLFLKQMLMRYQNNSPPTNDDKWKNSYVTKTWDRLMLQDHCCGVNGPSDWQKYTSAFRVENSDADYPWPRQCCVMDKLQEPLNLDACKLGVPGYYHSQGCYELISGPMDRHAWGVAWFGFAILCWTFWVLLGTMFYWSRIEY</sequence>
<keyword id="KW-0325">Glycoprotein</keyword>
<keyword id="KW-0472">Membrane</keyword>
<keyword id="KW-1185">Reference proteome</keyword>
<keyword id="KW-0812">Transmembrane</keyword>
<keyword id="KW-1133">Transmembrane helix</keyword>
<reference key="1">
    <citation type="journal article" date="2004" name="Genome Res.">
        <title>The status, quality, and expansion of the NIH full-length cDNA project: the Mammalian Gene Collection (MGC).</title>
        <authorList>
            <consortium name="The MGC Project Team"/>
        </authorList>
    </citation>
    <scope>NUCLEOTIDE SEQUENCE [LARGE SCALE MRNA]</scope>
    <source>
        <tissue>Ovary</tissue>
    </source>
</reference>